<sequence length="349" mass="39046">MNFLYSTVNTLRDRYTPVSHKSTFRQTGQITPEEFVAAGDYLVYKFPTWSWGDADSPERRVSHLPPGKQFLVTRNVPCHRRLNDDFAGDAGHEEALVNDGDDFKGNAGDDEDGWLRTGGLASSQPLKVKEVRTVDDSGNVGDREVVEDDEIPDMEDEDDDEAIIRDSGADSKNSAHRTYTLYIMYSPYYRTPRLYLSGYLANGQPLPPTDMTEDIVGDYKDKTVTLEDFPFFANNIKMASVHPCKHASVMKTLLDRADAALRLRREKLRAGNASSSQAPSGMEGLVDEIGKLDVKGAQEAADKDEWEEVQEAEIDDQEVAIRVDQYLVVFLKFMASVTPGIEHDFTMGV</sequence>
<proteinExistence type="inferred from homology"/>
<protein>
    <recommendedName>
        <fullName evidence="4">Autophagy-related protein 3</fullName>
    </recommendedName>
    <alternativeName>
        <fullName evidence="4">Autophagy-related E2-like conjugation enzyme ATG3</fullName>
    </alternativeName>
</protein>
<comment type="function">
    <text evidence="1 3">E2 conjugating enzyme required for the cytoplasm to vacuole transport (Cvt) and autophagy (By similarity). Required for selective autophagic degradation of the nucleus (nucleophagy) as well as for mitophagy which contributes to regulate mitochondrial quantity and quality by eliminating the mitochondria to a basal level to fulfill cellular energy requirements and preventing excess ROS production (By similarity). Responsible for the E2-like covalent binding of phosphatidylethanolamine to the C-terminal Gly of ATG8 (By similarity). The ATG12-ATG5 conjugate plays a role of an E3 and promotes the transfer of ATG8 from ATG3 to phosphatidylethanolamine (PE) (By similarity). This step is required for the membrane association of ATG8 (By similarity). The formation of the ATG8-phosphatidylethanolamine conjugate is essential for autophagy and for the cytoplasm to vacuole transport (Cvt) (By similarity). The ATG8-PE conjugate mediates tethering between adjacent membranes and stimulates membrane hemifusion, leading to expansion of the autophagosomal membrane during autophagy (By similarity). Autophagy is required for proper vegetative growth, asexual/sexual reproduction, and full virulence (PubMed:28894236). Autophagy is particularly involved in the biosynthesis of deoxynivalenol (DON), an important virulence determinant (PubMed:28894236).</text>
</comment>
<comment type="subunit">
    <text evidence="1">Monomer (By similarity). Interacts with ATG8 through an intermediate thioester bond between Cys-244 and the C-terminal Gly of ATG8 (By similarity). Interacts with the C-terminal region of the E1-like ATG7 enzyme (By similarity). Also interacts with the ATG12-ATG5 conjugate (By similarity).</text>
</comment>
<comment type="subcellular location">
    <subcellularLocation>
        <location evidence="1">Cytoplasm</location>
    </subcellularLocation>
</comment>
<comment type="domain">
    <text evidence="1">The N-terminal region is involved in phosphatidylethanolamine-binding and is required for ATG8-PE conjugation (By similarity).</text>
</comment>
<comment type="domain">
    <text evidence="1">The flexible region (FR) is required for ATG7-binding (By similarity).</text>
</comment>
<comment type="domain">
    <text evidence="1">The handle region (HR) contains the ATG8 interaction motif (AIM) and mediates binding to ATG8 (By similarity). It is crucial for the cytoplasm-to-vacuole targeting pathway (By similarity).</text>
</comment>
<comment type="disruption phenotype">
    <text evidence="3">Significantly decreases the radial growth of colonies under nutrient-rich conditions (PubMed:28894236). Causes only mild infection in point-inoculated spikelets of flowering wheat heads and impairs the spreading to nearby spikelets (PubMed:28894236). Strongly reduces the production of deoxynivalenol (DON), an important virulence determinant (PubMed:28894236).</text>
</comment>
<comment type="similarity">
    <text evidence="5">Belongs to the ATG3 family.</text>
</comment>
<dbReference type="EMBL" id="HG970333">
    <property type="protein sequence ID" value="CEF77363.1"/>
    <property type="molecule type" value="Genomic_DNA"/>
</dbReference>
<dbReference type="RefSeq" id="XP_011319806.1">
    <property type="nucleotide sequence ID" value="XM_011321504.1"/>
</dbReference>
<dbReference type="SMR" id="I1RX50"/>
<dbReference type="FunCoup" id="I1RX50">
    <property type="interactions" value="1101"/>
</dbReference>
<dbReference type="STRING" id="229533.I1RX50"/>
<dbReference type="KEGG" id="fgr:FGSG_08900"/>
<dbReference type="VEuPathDB" id="FungiDB:FGRAMPH1_01G11121"/>
<dbReference type="eggNOG" id="KOG2981">
    <property type="taxonomic scope" value="Eukaryota"/>
</dbReference>
<dbReference type="HOGENOM" id="CLU_027518_2_0_1"/>
<dbReference type="InParanoid" id="I1RX50"/>
<dbReference type="OrthoDB" id="114705at110618"/>
<dbReference type="Proteomes" id="UP000070720">
    <property type="component" value="Chromosome 2"/>
</dbReference>
<dbReference type="GO" id="GO:0005829">
    <property type="term" value="C:cytosol"/>
    <property type="evidence" value="ECO:0007669"/>
    <property type="project" value="TreeGrafter"/>
</dbReference>
<dbReference type="GO" id="GO:0000407">
    <property type="term" value="C:phagophore assembly site"/>
    <property type="evidence" value="ECO:0007669"/>
    <property type="project" value="TreeGrafter"/>
</dbReference>
<dbReference type="GO" id="GO:0019776">
    <property type="term" value="F:Atg8-family ligase activity"/>
    <property type="evidence" value="ECO:0007669"/>
    <property type="project" value="TreeGrafter"/>
</dbReference>
<dbReference type="GO" id="GO:0000045">
    <property type="term" value="P:autophagosome assembly"/>
    <property type="evidence" value="ECO:0007669"/>
    <property type="project" value="TreeGrafter"/>
</dbReference>
<dbReference type="GO" id="GO:0000422">
    <property type="term" value="P:autophagy of mitochondrion"/>
    <property type="evidence" value="ECO:0007669"/>
    <property type="project" value="TreeGrafter"/>
</dbReference>
<dbReference type="GO" id="GO:0061723">
    <property type="term" value="P:glycophagy"/>
    <property type="evidence" value="ECO:0007669"/>
    <property type="project" value="TreeGrafter"/>
</dbReference>
<dbReference type="GO" id="GO:0044804">
    <property type="term" value="P:nucleophagy"/>
    <property type="evidence" value="ECO:0007669"/>
    <property type="project" value="TreeGrafter"/>
</dbReference>
<dbReference type="GO" id="GO:0015031">
    <property type="term" value="P:protein transport"/>
    <property type="evidence" value="ECO:0007669"/>
    <property type="project" value="UniProtKB-KW"/>
</dbReference>
<dbReference type="InterPro" id="IPR007135">
    <property type="entry name" value="Atg3/Atg10"/>
</dbReference>
<dbReference type="PANTHER" id="PTHR12866">
    <property type="entry name" value="UBIQUITIN-LIKE-CONJUGATING ENZYME ATG3"/>
    <property type="match status" value="1"/>
</dbReference>
<dbReference type="PANTHER" id="PTHR12866:SF2">
    <property type="entry name" value="UBIQUITIN-LIKE-CONJUGATING ENZYME ATG3"/>
    <property type="match status" value="1"/>
</dbReference>
<dbReference type="Pfam" id="PF03987">
    <property type="entry name" value="Autophagy_act_C"/>
    <property type="match status" value="1"/>
</dbReference>
<reference key="1">
    <citation type="journal article" date="2007" name="Science">
        <title>The Fusarium graminearum genome reveals a link between localized polymorphism and pathogen specialization.</title>
        <authorList>
            <person name="Cuomo C.A."/>
            <person name="Gueldener U."/>
            <person name="Xu J.-R."/>
            <person name="Trail F."/>
            <person name="Turgeon B.G."/>
            <person name="Di Pietro A."/>
            <person name="Walton J.D."/>
            <person name="Ma L.-J."/>
            <person name="Baker S.E."/>
            <person name="Rep M."/>
            <person name="Adam G."/>
            <person name="Antoniw J."/>
            <person name="Baldwin T."/>
            <person name="Calvo S.E."/>
            <person name="Chang Y.-L."/>
            <person name="DeCaprio D."/>
            <person name="Gale L.R."/>
            <person name="Gnerre S."/>
            <person name="Goswami R.S."/>
            <person name="Hammond-Kosack K."/>
            <person name="Harris L.J."/>
            <person name="Hilburn K."/>
            <person name="Kennell J.C."/>
            <person name="Kroken S."/>
            <person name="Magnuson J.K."/>
            <person name="Mannhaupt G."/>
            <person name="Mauceli E.W."/>
            <person name="Mewes H.-W."/>
            <person name="Mitterbauer R."/>
            <person name="Muehlbauer G."/>
            <person name="Muensterkoetter M."/>
            <person name="Nelson D."/>
            <person name="O'Donnell K."/>
            <person name="Ouellet T."/>
            <person name="Qi W."/>
            <person name="Quesneville H."/>
            <person name="Roncero M.I.G."/>
            <person name="Seong K.-Y."/>
            <person name="Tetko I.V."/>
            <person name="Urban M."/>
            <person name="Waalwijk C."/>
            <person name="Ward T.J."/>
            <person name="Yao J."/>
            <person name="Birren B.W."/>
            <person name="Kistler H.C."/>
        </authorList>
    </citation>
    <scope>NUCLEOTIDE SEQUENCE [LARGE SCALE GENOMIC DNA]</scope>
    <source>
        <strain>ATCC MYA-4620 / CBS 123657 / FGSC 9075 / NRRL 31084 / PH-1</strain>
    </source>
</reference>
<reference key="2">
    <citation type="journal article" date="2010" name="Nature">
        <title>Comparative genomics reveals mobile pathogenicity chromosomes in Fusarium.</title>
        <authorList>
            <person name="Ma L.-J."/>
            <person name="van der Does H.C."/>
            <person name="Borkovich K.A."/>
            <person name="Coleman J.J."/>
            <person name="Daboussi M.-J."/>
            <person name="Di Pietro A."/>
            <person name="Dufresne M."/>
            <person name="Freitag M."/>
            <person name="Grabherr M."/>
            <person name="Henrissat B."/>
            <person name="Houterman P.M."/>
            <person name="Kang S."/>
            <person name="Shim W.-B."/>
            <person name="Woloshuk C."/>
            <person name="Xie X."/>
            <person name="Xu J.-R."/>
            <person name="Antoniw J."/>
            <person name="Baker S.E."/>
            <person name="Bluhm B.H."/>
            <person name="Breakspear A."/>
            <person name="Brown D.W."/>
            <person name="Butchko R.A.E."/>
            <person name="Chapman S."/>
            <person name="Coulson R."/>
            <person name="Coutinho P.M."/>
            <person name="Danchin E.G.J."/>
            <person name="Diener A."/>
            <person name="Gale L.R."/>
            <person name="Gardiner D.M."/>
            <person name="Goff S."/>
            <person name="Hammond-Kosack K.E."/>
            <person name="Hilburn K."/>
            <person name="Hua-Van A."/>
            <person name="Jonkers W."/>
            <person name="Kazan K."/>
            <person name="Kodira C.D."/>
            <person name="Koehrsen M."/>
            <person name="Kumar L."/>
            <person name="Lee Y.-H."/>
            <person name="Li L."/>
            <person name="Manners J.M."/>
            <person name="Miranda-Saavedra D."/>
            <person name="Mukherjee M."/>
            <person name="Park G."/>
            <person name="Park J."/>
            <person name="Park S.-Y."/>
            <person name="Proctor R.H."/>
            <person name="Regev A."/>
            <person name="Ruiz-Roldan M.C."/>
            <person name="Sain D."/>
            <person name="Sakthikumar S."/>
            <person name="Sykes S."/>
            <person name="Schwartz D.C."/>
            <person name="Turgeon B.G."/>
            <person name="Wapinski I."/>
            <person name="Yoder O."/>
            <person name="Young S."/>
            <person name="Zeng Q."/>
            <person name="Zhou S."/>
            <person name="Galagan J."/>
            <person name="Cuomo C.A."/>
            <person name="Kistler H.C."/>
            <person name="Rep M."/>
        </authorList>
    </citation>
    <scope>GENOME REANNOTATION</scope>
    <source>
        <strain>ATCC MYA-4620 / CBS 123657 / FGSC 9075 / NRRL 31084 / PH-1</strain>
    </source>
</reference>
<reference key="3">
    <citation type="journal article" date="2015" name="BMC Genomics">
        <title>The completed genome sequence of the pathogenic ascomycete fungus Fusarium graminearum.</title>
        <authorList>
            <person name="King R."/>
            <person name="Urban M."/>
            <person name="Hammond-Kosack M.C.U."/>
            <person name="Hassani-Pak K."/>
            <person name="Hammond-Kosack K.E."/>
        </authorList>
    </citation>
    <scope>NUCLEOTIDE SEQUENCE [LARGE SCALE GENOMIC DNA]</scope>
    <source>
        <strain>ATCC MYA-4620 / CBS 123657 / FGSC 9075 / NRRL 31084 / PH-1</strain>
    </source>
</reference>
<reference key="4">
    <citation type="journal article" date="2017" name="Sci. Rep.">
        <title>Genome-wide functional analysis reveals that autophagy is necessary for growth, sporulation, deoxynivalenol production and virulence in Fusarium graminearum.</title>
        <authorList>
            <person name="Lv W."/>
            <person name="Wang C."/>
            <person name="Yang N."/>
            <person name="Que Y."/>
            <person name="Talbot N.J."/>
            <person name="Wang Z."/>
        </authorList>
    </citation>
    <scope>IDENTIFICATION</scope>
    <scope>FUNCTION</scope>
    <scope>DISRUPTION PHENOTYPE</scope>
</reference>
<name>ATG3_GIBZE</name>
<evidence type="ECO:0000250" key="1">
    <source>
        <dbReference type="UniProtKB" id="P40344"/>
    </source>
</evidence>
<evidence type="ECO:0000255" key="2"/>
<evidence type="ECO:0000269" key="3">
    <source>
    </source>
</evidence>
<evidence type="ECO:0000303" key="4">
    <source>
    </source>
</evidence>
<evidence type="ECO:0000305" key="5"/>
<organism>
    <name type="scientific">Gibberella zeae (strain ATCC MYA-4620 / CBS 123657 / FGSC 9075 / NRRL 31084 / PH-1)</name>
    <name type="common">Wheat head blight fungus</name>
    <name type="synonym">Fusarium graminearum</name>
    <dbReference type="NCBI Taxonomy" id="229533"/>
    <lineage>
        <taxon>Eukaryota</taxon>
        <taxon>Fungi</taxon>
        <taxon>Dikarya</taxon>
        <taxon>Ascomycota</taxon>
        <taxon>Pezizomycotina</taxon>
        <taxon>Sordariomycetes</taxon>
        <taxon>Hypocreomycetidae</taxon>
        <taxon>Hypocreales</taxon>
        <taxon>Nectriaceae</taxon>
        <taxon>Fusarium</taxon>
    </lineage>
</organism>
<gene>
    <name evidence="4" type="primary">ATG3</name>
    <name type="ORF">FG08900</name>
    <name type="ORF">FGRAMPH1_01T11121</name>
</gene>
<feature type="chain" id="PRO_0000443868" description="Autophagy-related protein 3">
    <location>
        <begin position="1"/>
        <end position="349"/>
    </location>
</feature>
<feature type="region of interest" description="Flexible region" evidence="1">
    <location>
        <begin position="95"/>
        <end position="173"/>
    </location>
</feature>
<feature type="region of interest" description="Handle region" evidence="1">
    <location>
        <begin position="248"/>
        <end position="325"/>
    </location>
</feature>
<feature type="short sequence motif" description="ATG8 interaction motif (AIM)" evidence="1">
    <location>
        <begin position="306"/>
        <end position="309"/>
    </location>
</feature>
<feature type="active site" description="Glycyl thioester intermediate" evidence="2">
    <location>
        <position position="244"/>
    </location>
</feature>
<accession>I1RX50</accession>
<keyword id="KW-0072">Autophagy</keyword>
<keyword id="KW-0963">Cytoplasm</keyword>
<keyword id="KW-0653">Protein transport</keyword>
<keyword id="KW-1185">Reference proteome</keyword>
<keyword id="KW-0813">Transport</keyword>
<keyword id="KW-0833">Ubl conjugation pathway</keyword>